<dbReference type="EMBL" id="CP001087">
    <property type="protein sequence ID" value="ACN13784.1"/>
    <property type="molecule type" value="Genomic_DNA"/>
</dbReference>
<dbReference type="RefSeq" id="WP_012663032.1">
    <property type="nucleotide sequence ID" value="NC_012108.1"/>
</dbReference>
<dbReference type="SMR" id="C0QIZ4"/>
<dbReference type="STRING" id="177437.HRM2_06700"/>
<dbReference type="KEGG" id="dat:HRM2_06700"/>
<dbReference type="eggNOG" id="COG0230">
    <property type="taxonomic scope" value="Bacteria"/>
</dbReference>
<dbReference type="HOGENOM" id="CLU_129938_2_0_7"/>
<dbReference type="OrthoDB" id="9804164at2"/>
<dbReference type="Proteomes" id="UP000000442">
    <property type="component" value="Chromosome"/>
</dbReference>
<dbReference type="GO" id="GO:1990904">
    <property type="term" value="C:ribonucleoprotein complex"/>
    <property type="evidence" value="ECO:0007669"/>
    <property type="project" value="UniProtKB-KW"/>
</dbReference>
<dbReference type="GO" id="GO:0005840">
    <property type="term" value="C:ribosome"/>
    <property type="evidence" value="ECO:0007669"/>
    <property type="project" value="UniProtKB-KW"/>
</dbReference>
<dbReference type="GO" id="GO:0003735">
    <property type="term" value="F:structural constituent of ribosome"/>
    <property type="evidence" value="ECO:0007669"/>
    <property type="project" value="InterPro"/>
</dbReference>
<dbReference type="GO" id="GO:0006412">
    <property type="term" value="P:translation"/>
    <property type="evidence" value="ECO:0007669"/>
    <property type="project" value="UniProtKB-UniRule"/>
</dbReference>
<dbReference type="FunFam" id="1.10.287.3980:FF:000001">
    <property type="entry name" value="Mitochondrial ribosomal protein L34"/>
    <property type="match status" value="1"/>
</dbReference>
<dbReference type="Gene3D" id="1.10.287.3980">
    <property type="match status" value="1"/>
</dbReference>
<dbReference type="HAMAP" id="MF_00391">
    <property type="entry name" value="Ribosomal_bL34"/>
    <property type="match status" value="1"/>
</dbReference>
<dbReference type="InterPro" id="IPR000271">
    <property type="entry name" value="Ribosomal_bL34"/>
</dbReference>
<dbReference type="InterPro" id="IPR020939">
    <property type="entry name" value="Ribosomal_bL34_CS"/>
</dbReference>
<dbReference type="NCBIfam" id="TIGR01030">
    <property type="entry name" value="rpmH_bact"/>
    <property type="match status" value="1"/>
</dbReference>
<dbReference type="PANTHER" id="PTHR14503:SF4">
    <property type="entry name" value="LARGE RIBOSOMAL SUBUNIT PROTEIN BL34M"/>
    <property type="match status" value="1"/>
</dbReference>
<dbReference type="PANTHER" id="PTHR14503">
    <property type="entry name" value="MITOCHONDRIAL RIBOSOMAL PROTEIN 34 FAMILY MEMBER"/>
    <property type="match status" value="1"/>
</dbReference>
<dbReference type="Pfam" id="PF00468">
    <property type="entry name" value="Ribosomal_L34"/>
    <property type="match status" value="1"/>
</dbReference>
<dbReference type="PROSITE" id="PS00784">
    <property type="entry name" value="RIBOSOMAL_L34"/>
    <property type="match status" value="1"/>
</dbReference>
<keyword id="KW-1185">Reference proteome</keyword>
<keyword id="KW-0687">Ribonucleoprotein</keyword>
<keyword id="KW-0689">Ribosomal protein</keyword>
<gene>
    <name evidence="1" type="primary">rpmH</name>
    <name type="ordered locus">HRM2_06700</name>
</gene>
<sequence length="44" mass="5252">MKRTFQPSRIKRARRHGFRKRMSTAAGRRIVNSRRARGRKKLTA</sequence>
<feature type="chain" id="PRO_1000205822" description="Large ribosomal subunit protein bL34">
    <location>
        <begin position="1"/>
        <end position="44"/>
    </location>
</feature>
<feature type="region of interest" description="Disordered" evidence="2">
    <location>
        <begin position="1"/>
        <end position="44"/>
    </location>
</feature>
<feature type="compositionally biased region" description="Basic residues" evidence="2">
    <location>
        <begin position="1"/>
        <end position="22"/>
    </location>
</feature>
<feature type="compositionally biased region" description="Basic residues" evidence="2">
    <location>
        <begin position="31"/>
        <end position="44"/>
    </location>
</feature>
<reference key="1">
    <citation type="journal article" date="2009" name="Environ. Microbiol.">
        <title>Genome sequence of Desulfobacterium autotrophicum HRM2, a marine sulfate reducer oxidizing organic carbon completely to carbon dioxide.</title>
        <authorList>
            <person name="Strittmatter A.W."/>
            <person name="Liesegang H."/>
            <person name="Rabus R."/>
            <person name="Decker I."/>
            <person name="Amann J."/>
            <person name="Andres S."/>
            <person name="Henne A."/>
            <person name="Fricke W.F."/>
            <person name="Martinez-Arias R."/>
            <person name="Bartels D."/>
            <person name="Goesmann A."/>
            <person name="Krause L."/>
            <person name="Puehler A."/>
            <person name="Klenk H.P."/>
            <person name="Richter M."/>
            <person name="Schuler M."/>
            <person name="Gloeckner F.O."/>
            <person name="Meyerdierks A."/>
            <person name="Gottschalk G."/>
            <person name="Amann R."/>
        </authorList>
    </citation>
    <scope>NUCLEOTIDE SEQUENCE [LARGE SCALE GENOMIC DNA]</scope>
    <source>
        <strain>ATCC 43914 / DSM 3382 / VKM B-1955 / HRM2</strain>
    </source>
</reference>
<comment type="similarity">
    <text evidence="1">Belongs to the bacterial ribosomal protein bL34 family.</text>
</comment>
<name>RL34_DESAH</name>
<accession>C0QIZ4</accession>
<protein>
    <recommendedName>
        <fullName evidence="1">Large ribosomal subunit protein bL34</fullName>
    </recommendedName>
    <alternativeName>
        <fullName evidence="3">50S ribosomal protein L34</fullName>
    </alternativeName>
</protein>
<proteinExistence type="inferred from homology"/>
<organism>
    <name type="scientific">Desulforapulum autotrophicum (strain ATCC 43914 / DSM 3382 / VKM B-1955 / HRM2)</name>
    <name type="common">Desulfobacterium autotrophicum</name>
    <dbReference type="NCBI Taxonomy" id="177437"/>
    <lineage>
        <taxon>Bacteria</taxon>
        <taxon>Pseudomonadati</taxon>
        <taxon>Thermodesulfobacteriota</taxon>
        <taxon>Desulfobacteria</taxon>
        <taxon>Desulfobacterales</taxon>
        <taxon>Desulfobacteraceae</taxon>
        <taxon>Desulforapulum</taxon>
    </lineage>
</organism>
<evidence type="ECO:0000255" key="1">
    <source>
        <dbReference type="HAMAP-Rule" id="MF_00391"/>
    </source>
</evidence>
<evidence type="ECO:0000256" key="2">
    <source>
        <dbReference type="SAM" id="MobiDB-lite"/>
    </source>
</evidence>
<evidence type="ECO:0000305" key="3"/>